<gene>
    <name evidence="1" type="primary">murG</name>
    <name type="ordered locus">ABO_0598</name>
</gene>
<reference key="1">
    <citation type="journal article" date="2006" name="Nat. Biotechnol.">
        <title>Genome sequence of the ubiquitous hydrocarbon-degrading marine bacterium Alcanivorax borkumensis.</title>
        <authorList>
            <person name="Schneiker S."/>
            <person name="Martins dos Santos V.A.P."/>
            <person name="Bartels D."/>
            <person name="Bekel T."/>
            <person name="Brecht M."/>
            <person name="Buhrmester J."/>
            <person name="Chernikova T.N."/>
            <person name="Denaro R."/>
            <person name="Ferrer M."/>
            <person name="Gertler C."/>
            <person name="Goesmann A."/>
            <person name="Golyshina O.V."/>
            <person name="Kaminski F."/>
            <person name="Khachane A.N."/>
            <person name="Lang S."/>
            <person name="Linke B."/>
            <person name="McHardy A.C."/>
            <person name="Meyer F."/>
            <person name="Nechitaylo T."/>
            <person name="Puehler A."/>
            <person name="Regenhardt D."/>
            <person name="Rupp O."/>
            <person name="Sabirova J.S."/>
            <person name="Selbitschka W."/>
            <person name="Yakimov M.M."/>
            <person name="Timmis K.N."/>
            <person name="Vorhoelter F.-J."/>
            <person name="Weidner S."/>
            <person name="Kaiser O."/>
            <person name="Golyshin P.N."/>
        </authorList>
    </citation>
    <scope>NUCLEOTIDE SEQUENCE [LARGE SCALE GENOMIC DNA]</scope>
    <source>
        <strain>ATCC 700651 / DSM 11573 / NCIMB 13689 / SK2</strain>
    </source>
</reference>
<name>MURG_ALCBS</name>
<dbReference type="EC" id="2.4.1.227" evidence="1"/>
<dbReference type="EMBL" id="AM286690">
    <property type="protein sequence ID" value="CAL16046.1"/>
    <property type="molecule type" value="Genomic_DNA"/>
</dbReference>
<dbReference type="RefSeq" id="WP_011587884.1">
    <property type="nucleotide sequence ID" value="NC_008260.1"/>
</dbReference>
<dbReference type="SMR" id="Q0VS02"/>
<dbReference type="STRING" id="393595.ABO_0598"/>
<dbReference type="CAZy" id="GT28">
    <property type="family name" value="Glycosyltransferase Family 28"/>
</dbReference>
<dbReference type="KEGG" id="abo:ABO_0598"/>
<dbReference type="eggNOG" id="COG0707">
    <property type="taxonomic scope" value="Bacteria"/>
</dbReference>
<dbReference type="HOGENOM" id="CLU_037404_2_0_6"/>
<dbReference type="OrthoDB" id="9808936at2"/>
<dbReference type="UniPathway" id="UPA00219"/>
<dbReference type="Proteomes" id="UP000008871">
    <property type="component" value="Chromosome"/>
</dbReference>
<dbReference type="GO" id="GO:0005886">
    <property type="term" value="C:plasma membrane"/>
    <property type="evidence" value="ECO:0007669"/>
    <property type="project" value="UniProtKB-SubCell"/>
</dbReference>
<dbReference type="GO" id="GO:0051991">
    <property type="term" value="F:UDP-N-acetyl-D-glucosamine:N-acetylmuramoyl-L-alanyl-D-glutamyl-meso-2,6-diaminopimelyl-D-alanyl-D-alanine-diphosphoundecaprenol 4-beta-N-acetylglucosaminlytransferase activity"/>
    <property type="evidence" value="ECO:0007669"/>
    <property type="project" value="RHEA"/>
</dbReference>
<dbReference type="GO" id="GO:0050511">
    <property type="term" value="F:undecaprenyldiphospho-muramoylpentapeptide beta-N-acetylglucosaminyltransferase activity"/>
    <property type="evidence" value="ECO:0007669"/>
    <property type="project" value="UniProtKB-UniRule"/>
</dbReference>
<dbReference type="GO" id="GO:0005975">
    <property type="term" value="P:carbohydrate metabolic process"/>
    <property type="evidence" value="ECO:0007669"/>
    <property type="project" value="InterPro"/>
</dbReference>
<dbReference type="GO" id="GO:0051301">
    <property type="term" value="P:cell division"/>
    <property type="evidence" value="ECO:0007669"/>
    <property type="project" value="UniProtKB-KW"/>
</dbReference>
<dbReference type="GO" id="GO:0071555">
    <property type="term" value="P:cell wall organization"/>
    <property type="evidence" value="ECO:0007669"/>
    <property type="project" value="UniProtKB-KW"/>
</dbReference>
<dbReference type="GO" id="GO:0030259">
    <property type="term" value="P:lipid glycosylation"/>
    <property type="evidence" value="ECO:0007669"/>
    <property type="project" value="UniProtKB-UniRule"/>
</dbReference>
<dbReference type="GO" id="GO:0009252">
    <property type="term" value="P:peptidoglycan biosynthetic process"/>
    <property type="evidence" value="ECO:0007669"/>
    <property type="project" value="UniProtKB-UniRule"/>
</dbReference>
<dbReference type="GO" id="GO:0008360">
    <property type="term" value="P:regulation of cell shape"/>
    <property type="evidence" value="ECO:0007669"/>
    <property type="project" value="UniProtKB-KW"/>
</dbReference>
<dbReference type="CDD" id="cd03785">
    <property type="entry name" value="GT28_MurG"/>
    <property type="match status" value="1"/>
</dbReference>
<dbReference type="Gene3D" id="3.40.50.2000">
    <property type="entry name" value="Glycogen Phosphorylase B"/>
    <property type="match status" value="2"/>
</dbReference>
<dbReference type="HAMAP" id="MF_00033">
    <property type="entry name" value="MurG"/>
    <property type="match status" value="1"/>
</dbReference>
<dbReference type="InterPro" id="IPR006009">
    <property type="entry name" value="GlcNAc_MurG"/>
</dbReference>
<dbReference type="InterPro" id="IPR007235">
    <property type="entry name" value="Glyco_trans_28_C"/>
</dbReference>
<dbReference type="InterPro" id="IPR004276">
    <property type="entry name" value="GlycoTrans_28_N"/>
</dbReference>
<dbReference type="NCBIfam" id="TIGR01133">
    <property type="entry name" value="murG"/>
    <property type="match status" value="1"/>
</dbReference>
<dbReference type="PANTHER" id="PTHR21015:SF22">
    <property type="entry name" value="GLYCOSYLTRANSFERASE"/>
    <property type="match status" value="1"/>
</dbReference>
<dbReference type="PANTHER" id="PTHR21015">
    <property type="entry name" value="UDP-N-ACETYLGLUCOSAMINE--N-ACETYLMURAMYL-(PENTAPEPTIDE) PYROPHOSPHORYL-UNDECAPRENOL N-ACETYLGLUCOSAMINE TRANSFERASE 1"/>
    <property type="match status" value="1"/>
</dbReference>
<dbReference type="Pfam" id="PF04101">
    <property type="entry name" value="Glyco_tran_28_C"/>
    <property type="match status" value="1"/>
</dbReference>
<dbReference type="Pfam" id="PF03033">
    <property type="entry name" value="Glyco_transf_28"/>
    <property type="match status" value="1"/>
</dbReference>
<dbReference type="SUPFAM" id="SSF53756">
    <property type="entry name" value="UDP-Glycosyltransferase/glycogen phosphorylase"/>
    <property type="match status" value="1"/>
</dbReference>
<proteinExistence type="inferred from homology"/>
<accession>Q0VS02</accession>
<feature type="chain" id="PRO_1000002610" description="UDP-N-acetylglucosamine--N-acetylmuramyl-(pentapeptide) pyrophosphoryl-undecaprenol N-acetylglucosamine transferase">
    <location>
        <begin position="1"/>
        <end position="357"/>
    </location>
</feature>
<feature type="binding site" evidence="1">
    <location>
        <begin position="12"/>
        <end position="14"/>
    </location>
    <ligand>
        <name>UDP-N-acetyl-alpha-D-glucosamine</name>
        <dbReference type="ChEBI" id="CHEBI:57705"/>
    </ligand>
</feature>
<feature type="binding site" evidence="1">
    <location>
        <position position="124"/>
    </location>
    <ligand>
        <name>UDP-N-acetyl-alpha-D-glucosamine</name>
        <dbReference type="ChEBI" id="CHEBI:57705"/>
    </ligand>
</feature>
<feature type="binding site" evidence="1">
    <location>
        <position position="162"/>
    </location>
    <ligand>
        <name>UDP-N-acetyl-alpha-D-glucosamine</name>
        <dbReference type="ChEBI" id="CHEBI:57705"/>
    </ligand>
</feature>
<feature type="binding site" evidence="1">
    <location>
        <position position="190"/>
    </location>
    <ligand>
        <name>UDP-N-acetyl-alpha-D-glucosamine</name>
        <dbReference type="ChEBI" id="CHEBI:57705"/>
    </ligand>
</feature>
<feature type="binding site" evidence="1">
    <location>
        <position position="243"/>
    </location>
    <ligand>
        <name>UDP-N-acetyl-alpha-D-glucosamine</name>
        <dbReference type="ChEBI" id="CHEBI:57705"/>
    </ligand>
</feature>
<feature type="binding site" evidence="1">
    <location>
        <begin position="262"/>
        <end position="267"/>
    </location>
    <ligand>
        <name>UDP-N-acetyl-alpha-D-glucosamine</name>
        <dbReference type="ChEBI" id="CHEBI:57705"/>
    </ligand>
</feature>
<feature type="binding site" evidence="1">
    <location>
        <position position="288"/>
    </location>
    <ligand>
        <name>UDP-N-acetyl-alpha-D-glucosamine</name>
        <dbReference type="ChEBI" id="CHEBI:57705"/>
    </ligand>
</feature>
<sequence length="357" mass="37658">MSGTVLIMAGGTGGHVFPALAVADQLRTRGFDILWLGAENGMEGNLVRQYGYEIAELSVSRLRGGGIKRKLTAPFNLLRAVLQARQLIRARQPVLAVGFGGFASGPGGLAARLCKVPVVVHEQNAVPGLTNRLLSRLSTVTLEGFQGAFGHPQACWVGNPVRPQITALEEPARRYAQHQGGLRVLVLGGSQGALVLNQDLPELLLAVLGRDIQVRHQCGAGRTAEAAPIYQALGLQAQVSEFIDDMAEAYGWADLVICRAGALTVAEVAAAGVAALFVPLPSAVDDHQTLNARWLSERGAALLLPQRDLGAVSLAGTLKPVAERGLLAQIAERAREQAMADSAERAATLCEEVANGR</sequence>
<keyword id="KW-0131">Cell cycle</keyword>
<keyword id="KW-0132">Cell division</keyword>
<keyword id="KW-0997">Cell inner membrane</keyword>
<keyword id="KW-1003">Cell membrane</keyword>
<keyword id="KW-0133">Cell shape</keyword>
<keyword id="KW-0961">Cell wall biogenesis/degradation</keyword>
<keyword id="KW-0328">Glycosyltransferase</keyword>
<keyword id="KW-0472">Membrane</keyword>
<keyword id="KW-0573">Peptidoglycan synthesis</keyword>
<keyword id="KW-1185">Reference proteome</keyword>
<keyword id="KW-0808">Transferase</keyword>
<comment type="function">
    <text evidence="1">Cell wall formation. Catalyzes the transfer of a GlcNAc subunit on undecaprenyl-pyrophosphoryl-MurNAc-pentapeptide (lipid intermediate I) to form undecaprenyl-pyrophosphoryl-MurNAc-(pentapeptide)GlcNAc (lipid intermediate II).</text>
</comment>
<comment type="catalytic activity">
    <reaction evidence="1">
        <text>di-trans,octa-cis-undecaprenyl diphospho-N-acetyl-alpha-D-muramoyl-L-alanyl-D-glutamyl-meso-2,6-diaminopimeloyl-D-alanyl-D-alanine + UDP-N-acetyl-alpha-D-glucosamine = di-trans,octa-cis-undecaprenyl diphospho-[N-acetyl-alpha-D-glucosaminyl-(1-&gt;4)]-N-acetyl-alpha-D-muramoyl-L-alanyl-D-glutamyl-meso-2,6-diaminopimeloyl-D-alanyl-D-alanine + UDP + H(+)</text>
        <dbReference type="Rhea" id="RHEA:31227"/>
        <dbReference type="ChEBI" id="CHEBI:15378"/>
        <dbReference type="ChEBI" id="CHEBI:57705"/>
        <dbReference type="ChEBI" id="CHEBI:58223"/>
        <dbReference type="ChEBI" id="CHEBI:61387"/>
        <dbReference type="ChEBI" id="CHEBI:61388"/>
        <dbReference type="EC" id="2.4.1.227"/>
    </reaction>
</comment>
<comment type="pathway">
    <text evidence="1">Cell wall biogenesis; peptidoglycan biosynthesis.</text>
</comment>
<comment type="subcellular location">
    <subcellularLocation>
        <location evidence="1">Cell inner membrane</location>
        <topology evidence="1">Peripheral membrane protein</topology>
        <orientation evidence="1">Cytoplasmic side</orientation>
    </subcellularLocation>
</comment>
<comment type="similarity">
    <text evidence="1">Belongs to the glycosyltransferase 28 family. MurG subfamily.</text>
</comment>
<organism>
    <name type="scientific">Alcanivorax borkumensis (strain ATCC 700651 / DSM 11573 / NCIMB 13689 / SK2)</name>
    <dbReference type="NCBI Taxonomy" id="393595"/>
    <lineage>
        <taxon>Bacteria</taxon>
        <taxon>Pseudomonadati</taxon>
        <taxon>Pseudomonadota</taxon>
        <taxon>Gammaproteobacteria</taxon>
        <taxon>Oceanospirillales</taxon>
        <taxon>Alcanivoracaceae</taxon>
        <taxon>Alcanivorax</taxon>
    </lineage>
</organism>
<evidence type="ECO:0000255" key="1">
    <source>
        <dbReference type="HAMAP-Rule" id="MF_00033"/>
    </source>
</evidence>
<protein>
    <recommendedName>
        <fullName evidence="1">UDP-N-acetylglucosamine--N-acetylmuramyl-(pentapeptide) pyrophosphoryl-undecaprenol N-acetylglucosamine transferase</fullName>
        <ecNumber evidence="1">2.4.1.227</ecNumber>
    </recommendedName>
    <alternativeName>
        <fullName evidence="1">Undecaprenyl-PP-MurNAc-pentapeptide-UDPGlcNAc GlcNAc transferase</fullName>
    </alternativeName>
</protein>